<dbReference type="EMBL" id="CM000127">
    <property type="protein sequence ID" value="EEC73268.1"/>
    <property type="status" value="ALT_INIT"/>
    <property type="molecule type" value="Genomic_DNA"/>
</dbReference>
<dbReference type="STRING" id="39946.B8AIM8"/>
<dbReference type="EnsemblPlants" id="OsLiXu_02g0018770.01">
    <property type="protein sequence ID" value="OsLiXu_02g0018770.01"/>
    <property type="gene ID" value="OsLiXu_02g0018770"/>
</dbReference>
<dbReference type="EnsemblPlants" id="OsPr106_02g0018650.01">
    <property type="protein sequence ID" value="OsPr106_02g0018650.01"/>
    <property type="gene ID" value="OsPr106_02g0018650"/>
</dbReference>
<dbReference type="Gramene" id="OsLiXu_02g0018770.01">
    <property type="protein sequence ID" value="OsLiXu_02g0018770.01"/>
    <property type="gene ID" value="OsLiXu_02g0018770"/>
</dbReference>
<dbReference type="Gramene" id="OsPr106_02g0018650.01">
    <property type="protein sequence ID" value="OsPr106_02g0018650.01"/>
    <property type="gene ID" value="OsPr106_02g0018650"/>
</dbReference>
<dbReference type="HOGENOM" id="CLU_070197_1_0_1"/>
<dbReference type="Proteomes" id="UP000007015">
    <property type="component" value="Chromosome 2"/>
</dbReference>
<dbReference type="GO" id="GO:0005524">
    <property type="term" value="F:ATP binding"/>
    <property type="evidence" value="ECO:0007669"/>
    <property type="project" value="UniProtKB-KW"/>
</dbReference>
<dbReference type="GO" id="GO:0004386">
    <property type="term" value="F:helicase activity"/>
    <property type="evidence" value="ECO:0007669"/>
    <property type="project" value="UniProtKB-KW"/>
</dbReference>
<dbReference type="GO" id="GO:0016787">
    <property type="term" value="F:hydrolase activity"/>
    <property type="evidence" value="ECO:0007669"/>
    <property type="project" value="UniProtKB-KW"/>
</dbReference>
<dbReference type="Gene3D" id="2.20.70.10">
    <property type="match status" value="1"/>
</dbReference>
<dbReference type="InterPro" id="IPR036020">
    <property type="entry name" value="WW_dom_sf"/>
</dbReference>
<dbReference type="InterPro" id="IPR051105">
    <property type="entry name" value="WWC/KIBRA_Hippo_Reg"/>
</dbReference>
<dbReference type="PANTHER" id="PTHR14791">
    <property type="entry name" value="BOMB/KIRA PROTEINS"/>
    <property type="match status" value="1"/>
</dbReference>
<dbReference type="PANTHER" id="PTHR14791:SF29">
    <property type="entry name" value="PROTEIN KIBRA"/>
    <property type="match status" value="1"/>
</dbReference>
<dbReference type="SUPFAM" id="SSF51045">
    <property type="entry name" value="WW domain"/>
    <property type="match status" value="1"/>
</dbReference>
<reference key="1">
    <citation type="journal article" date="2005" name="PLoS Biol.">
        <title>The genomes of Oryza sativa: a history of duplications.</title>
        <authorList>
            <person name="Yu J."/>
            <person name="Wang J."/>
            <person name="Lin W."/>
            <person name="Li S."/>
            <person name="Li H."/>
            <person name="Zhou J."/>
            <person name="Ni P."/>
            <person name="Dong W."/>
            <person name="Hu S."/>
            <person name="Zeng C."/>
            <person name="Zhang J."/>
            <person name="Zhang Y."/>
            <person name="Li R."/>
            <person name="Xu Z."/>
            <person name="Li S."/>
            <person name="Li X."/>
            <person name="Zheng H."/>
            <person name="Cong L."/>
            <person name="Lin L."/>
            <person name="Yin J."/>
            <person name="Geng J."/>
            <person name="Li G."/>
            <person name="Shi J."/>
            <person name="Liu J."/>
            <person name="Lv H."/>
            <person name="Li J."/>
            <person name="Wang J."/>
            <person name="Deng Y."/>
            <person name="Ran L."/>
            <person name="Shi X."/>
            <person name="Wang X."/>
            <person name="Wu Q."/>
            <person name="Li C."/>
            <person name="Ren X."/>
            <person name="Wang J."/>
            <person name="Wang X."/>
            <person name="Li D."/>
            <person name="Liu D."/>
            <person name="Zhang X."/>
            <person name="Ji Z."/>
            <person name="Zhao W."/>
            <person name="Sun Y."/>
            <person name="Zhang Z."/>
            <person name="Bao J."/>
            <person name="Han Y."/>
            <person name="Dong L."/>
            <person name="Ji J."/>
            <person name="Chen P."/>
            <person name="Wu S."/>
            <person name="Liu J."/>
            <person name="Xiao Y."/>
            <person name="Bu D."/>
            <person name="Tan J."/>
            <person name="Yang L."/>
            <person name="Ye C."/>
            <person name="Zhang J."/>
            <person name="Xu J."/>
            <person name="Zhou Y."/>
            <person name="Yu Y."/>
            <person name="Zhang B."/>
            <person name="Zhuang S."/>
            <person name="Wei H."/>
            <person name="Liu B."/>
            <person name="Lei M."/>
            <person name="Yu H."/>
            <person name="Li Y."/>
            <person name="Xu H."/>
            <person name="Wei S."/>
            <person name="He X."/>
            <person name="Fang L."/>
            <person name="Zhang Z."/>
            <person name="Zhang Y."/>
            <person name="Huang X."/>
            <person name="Su Z."/>
            <person name="Tong W."/>
            <person name="Li J."/>
            <person name="Tong Z."/>
            <person name="Li S."/>
            <person name="Ye J."/>
            <person name="Wang L."/>
            <person name="Fang L."/>
            <person name="Lei T."/>
            <person name="Chen C.-S."/>
            <person name="Chen H.-C."/>
            <person name="Xu Z."/>
            <person name="Li H."/>
            <person name="Huang H."/>
            <person name="Zhang F."/>
            <person name="Xu H."/>
            <person name="Li N."/>
            <person name="Zhao C."/>
            <person name="Li S."/>
            <person name="Dong L."/>
            <person name="Huang Y."/>
            <person name="Li L."/>
            <person name="Xi Y."/>
            <person name="Qi Q."/>
            <person name="Li W."/>
            <person name="Zhang B."/>
            <person name="Hu W."/>
            <person name="Zhang Y."/>
            <person name="Tian X."/>
            <person name="Jiao Y."/>
            <person name="Liang X."/>
            <person name="Jin J."/>
            <person name="Gao L."/>
            <person name="Zheng W."/>
            <person name="Hao B."/>
            <person name="Liu S.-M."/>
            <person name="Wang W."/>
            <person name="Yuan L."/>
            <person name="Cao M."/>
            <person name="McDermott J."/>
            <person name="Samudrala R."/>
            <person name="Wang J."/>
            <person name="Wong G.K.-S."/>
            <person name="Yang H."/>
        </authorList>
    </citation>
    <scope>NUCLEOTIDE SEQUENCE [LARGE SCALE GENOMIC DNA]</scope>
    <source>
        <strain>cv. 93-11</strain>
    </source>
</reference>
<comment type="function">
    <text evidence="1">Negatively regulates the cuticle development probably by interacting with the HD-ZIP IV transcription factor HDG1.</text>
</comment>
<comment type="subunit">
    <text evidence="2">Binds to HDG1.</text>
</comment>
<comment type="sequence caution" evidence="6">
    <conflict type="erroneous initiation">
        <sequence resource="EMBL-CDS" id="EEC73268"/>
    </conflict>
    <text>Truncated N-terminus.</text>
</comment>
<name>CFL1_ORYSI</name>
<evidence type="ECO:0000250" key="1">
    <source>
        <dbReference type="UniProtKB" id="Q0E0W7"/>
    </source>
</evidence>
<evidence type="ECO:0000250" key="2">
    <source>
        <dbReference type="UniProtKB" id="Q5HZ54"/>
    </source>
</evidence>
<evidence type="ECO:0000250" key="3">
    <source>
        <dbReference type="UniProtKB" id="Q9SRN4"/>
    </source>
</evidence>
<evidence type="ECO:0000255" key="4">
    <source>
        <dbReference type="PROSITE-ProRule" id="PRU00224"/>
    </source>
</evidence>
<evidence type="ECO:0000256" key="5">
    <source>
        <dbReference type="SAM" id="MobiDB-lite"/>
    </source>
</evidence>
<evidence type="ECO:0000305" key="6"/>
<evidence type="ECO:0000312" key="7">
    <source>
        <dbReference type="EMBL" id="EEC73268.1"/>
    </source>
</evidence>
<sequence>MTAPNIEMIASSLRNCSLNGGGGGGGGRRRGRRAAAAEGSDDSEGVTVELNSEVALPYHWEQCLDIRTGQVYYINWEDGTRTTIDPRSSSAYSPSPASRSASSSSRRCSRARGRGGGGGAAAAASTTTSSGYTSVSSVGAVTAAAAAWRSHDSSGHGYGYGSYGYGYGYDGRDGDDEESSSSSSSSSSSSSASSSRGSAVSSTLSSFSPTDESASGAGSGYAVGDNGAHVLVAAGCRACFMYFMVPKTADVCPKCGSSGLLHLSRNGYV</sequence>
<keyword id="KW-0067">ATP-binding</keyword>
<keyword id="KW-0347">Helicase</keyword>
<keyword id="KW-0378">Hydrolase</keyword>
<keyword id="KW-0547">Nucleotide-binding</keyword>
<keyword id="KW-1185">Reference proteome</keyword>
<proteinExistence type="inferred from homology"/>
<organism>
    <name type="scientific">Oryza sativa subsp. indica</name>
    <name type="common">Rice</name>
    <dbReference type="NCBI Taxonomy" id="39946"/>
    <lineage>
        <taxon>Eukaryota</taxon>
        <taxon>Viridiplantae</taxon>
        <taxon>Streptophyta</taxon>
        <taxon>Embryophyta</taxon>
        <taxon>Tracheophyta</taxon>
        <taxon>Spermatophyta</taxon>
        <taxon>Magnoliopsida</taxon>
        <taxon>Liliopsida</taxon>
        <taxon>Poales</taxon>
        <taxon>Poaceae</taxon>
        <taxon>BOP clade</taxon>
        <taxon>Oryzoideae</taxon>
        <taxon>Oryzeae</taxon>
        <taxon>Oryzinae</taxon>
        <taxon>Oryza</taxon>
        <taxon>Oryza sativa</taxon>
    </lineage>
</organism>
<feature type="chain" id="PRO_0000456305" description="Protein CURLY FLAG LEAF 1">
    <location>
        <begin position="1"/>
        <end position="269"/>
    </location>
</feature>
<feature type="domain" description="WW" evidence="4">
    <location>
        <begin position="54"/>
        <end position="88"/>
    </location>
</feature>
<feature type="region of interest" description="Disordered" evidence="5">
    <location>
        <begin position="17"/>
        <end position="44"/>
    </location>
</feature>
<feature type="region of interest" description="Disordered" evidence="5">
    <location>
        <begin position="83"/>
        <end position="133"/>
    </location>
</feature>
<feature type="region of interest" description="Disordered" evidence="5">
    <location>
        <begin position="174"/>
        <end position="218"/>
    </location>
</feature>
<feature type="short sequence motif" description="EAR" evidence="3">
    <location>
        <begin position="47"/>
        <end position="52"/>
    </location>
</feature>
<feature type="compositionally biased region" description="Low complexity" evidence="5">
    <location>
        <begin position="87"/>
        <end position="106"/>
    </location>
</feature>
<feature type="compositionally biased region" description="Low complexity" evidence="5">
    <location>
        <begin position="121"/>
        <end position="133"/>
    </location>
</feature>
<feature type="compositionally biased region" description="Low complexity" evidence="5">
    <location>
        <begin position="180"/>
        <end position="202"/>
    </location>
</feature>
<feature type="compositionally biased region" description="Polar residues" evidence="5">
    <location>
        <begin position="203"/>
        <end position="212"/>
    </location>
</feature>
<protein>
    <recommendedName>
        <fullName evidence="1">Protein CURLY FLAG LEAF 1</fullName>
        <shortName evidence="1">OsCFL1</shortName>
    </recommendedName>
</protein>
<gene>
    <name evidence="1" type="primary">CFL1</name>
    <name evidence="7" type="ORF">OsI_07405</name>
</gene>
<accession>B8AIM8</accession>